<protein>
    <recommendedName>
        <fullName evidence="1">23S rRNA (uracil(1939)-C(5))-methyltransferase RlmD</fullName>
        <ecNumber evidence="1">2.1.1.190</ecNumber>
    </recommendedName>
    <alternativeName>
        <fullName evidence="1">23S rRNA(m5U1939)-methyltransferase</fullName>
    </alternativeName>
</protein>
<keyword id="KW-0004">4Fe-4S</keyword>
<keyword id="KW-0408">Iron</keyword>
<keyword id="KW-0411">Iron-sulfur</keyword>
<keyword id="KW-0479">Metal-binding</keyword>
<keyword id="KW-0489">Methyltransferase</keyword>
<keyword id="KW-1185">Reference proteome</keyword>
<keyword id="KW-0698">rRNA processing</keyword>
<keyword id="KW-0949">S-adenosyl-L-methionine</keyword>
<keyword id="KW-0808">Transferase</keyword>
<dbReference type="EC" id="2.1.1.190" evidence="1"/>
<dbReference type="EMBL" id="CP000529">
    <property type="protein sequence ID" value="ABM37879.1"/>
    <property type="molecule type" value="Genomic_DNA"/>
</dbReference>
<dbReference type="RefSeq" id="WP_011801956.1">
    <property type="nucleotide sequence ID" value="NC_008781.1"/>
</dbReference>
<dbReference type="SMR" id="A1VQF1"/>
<dbReference type="STRING" id="365044.Pnap_2576"/>
<dbReference type="KEGG" id="pna:Pnap_2576"/>
<dbReference type="eggNOG" id="COG2265">
    <property type="taxonomic scope" value="Bacteria"/>
</dbReference>
<dbReference type="HOGENOM" id="CLU_014689_8_2_4"/>
<dbReference type="OrthoDB" id="9804590at2"/>
<dbReference type="Proteomes" id="UP000000644">
    <property type="component" value="Chromosome"/>
</dbReference>
<dbReference type="GO" id="GO:0051539">
    <property type="term" value="F:4 iron, 4 sulfur cluster binding"/>
    <property type="evidence" value="ECO:0007669"/>
    <property type="project" value="UniProtKB-KW"/>
</dbReference>
<dbReference type="GO" id="GO:0005506">
    <property type="term" value="F:iron ion binding"/>
    <property type="evidence" value="ECO:0007669"/>
    <property type="project" value="UniProtKB-UniRule"/>
</dbReference>
<dbReference type="GO" id="GO:0003723">
    <property type="term" value="F:RNA binding"/>
    <property type="evidence" value="ECO:0007669"/>
    <property type="project" value="InterPro"/>
</dbReference>
<dbReference type="GO" id="GO:0070041">
    <property type="term" value="F:rRNA (uridine-C5-)-methyltransferase activity"/>
    <property type="evidence" value="ECO:0007669"/>
    <property type="project" value="UniProtKB-UniRule"/>
</dbReference>
<dbReference type="GO" id="GO:0070475">
    <property type="term" value="P:rRNA base methylation"/>
    <property type="evidence" value="ECO:0007669"/>
    <property type="project" value="TreeGrafter"/>
</dbReference>
<dbReference type="CDD" id="cd02440">
    <property type="entry name" value="AdoMet_MTases"/>
    <property type="match status" value="1"/>
</dbReference>
<dbReference type="Gene3D" id="2.40.50.1070">
    <property type="match status" value="1"/>
</dbReference>
<dbReference type="Gene3D" id="2.40.50.140">
    <property type="entry name" value="Nucleic acid-binding proteins"/>
    <property type="match status" value="1"/>
</dbReference>
<dbReference type="Gene3D" id="3.40.50.150">
    <property type="entry name" value="Vaccinia Virus protein VP39"/>
    <property type="match status" value="1"/>
</dbReference>
<dbReference type="HAMAP" id="MF_01010">
    <property type="entry name" value="23SrRNA_methyltr_RlmD"/>
    <property type="match status" value="1"/>
</dbReference>
<dbReference type="InterPro" id="IPR001566">
    <property type="entry name" value="23S_rRNA_MeTrfase_RlmD"/>
</dbReference>
<dbReference type="InterPro" id="IPR030391">
    <property type="entry name" value="MeTrfase_TrmA_CS"/>
</dbReference>
<dbReference type="InterPro" id="IPR012340">
    <property type="entry name" value="NA-bd_OB-fold"/>
</dbReference>
<dbReference type="InterPro" id="IPR029063">
    <property type="entry name" value="SAM-dependent_MTases_sf"/>
</dbReference>
<dbReference type="InterPro" id="IPR010280">
    <property type="entry name" value="U5_MeTrfase_fam"/>
</dbReference>
<dbReference type="NCBIfam" id="NF009639">
    <property type="entry name" value="PRK13168.1"/>
    <property type="match status" value="1"/>
</dbReference>
<dbReference type="NCBIfam" id="TIGR00479">
    <property type="entry name" value="rumA"/>
    <property type="match status" value="1"/>
</dbReference>
<dbReference type="PANTHER" id="PTHR11061:SF49">
    <property type="entry name" value="23S RRNA (URACIL(1939)-C(5))-METHYLTRANSFERASE RLMD"/>
    <property type="match status" value="1"/>
</dbReference>
<dbReference type="PANTHER" id="PTHR11061">
    <property type="entry name" value="RNA M5U METHYLTRANSFERASE"/>
    <property type="match status" value="1"/>
</dbReference>
<dbReference type="Pfam" id="PF05958">
    <property type="entry name" value="tRNA_U5-meth_tr"/>
    <property type="match status" value="1"/>
</dbReference>
<dbReference type="SUPFAM" id="SSF50249">
    <property type="entry name" value="Nucleic acid-binding proteins"/>
    <property type="match status" value="1"/>
</dbReference>
<dbReference type="SUPFAM" id="SSF53335">
    <property type="entry name" value="S-adenosyl-L-methionine-dependent methyltransferases"/>
    <property type="match status" value="1"/>
</dbReference>
<dbReference type="PROSITE" id="PS51687">
    <property type="entry name" value="SAM_MT_RNA_M5U"/>
    <property type="match status" value="1"/>
</dbReference>
<dbReference type="PROSITE" id="PS01231">
    <property type="entry name" value="TRMA_2"/>
    <property type="match status" value="1"/>
</dbReference>
<reference key="1">
    <citation type="journal article" date="2009" name="Environ. Microbiol.">
        <title>The genome of Polaromonas naphthalenivorans strain CJ2, isolated from coal tar-contaminated sediment, reveals physiological and metabolic versatility and evolution through extensive horizontal gene transfer.</title>
        <authorList>
            <person name="Yagi J.M."/>
            <person name="Sims D."/>
            <person name="Brettin T."/>
            <person name="Bruce D."/>
            <person name="Madsen E.L."/>
        </authorList>
    </citation>
    <scope>NUCLEOTIDE SEQUENCE [LARGE SCALE GENOMIC DNA]</scope>
    <source>
        <strain>CJ2</strain>
    </source>
</reference>
<accession>A1VQF1</accession>
<comment type="function">
    <text evidence="1">Catalyzes the formation of 5-methyl-uridine at position 1939 (m5U1939) in 23S rRNA.</text>
</comment>
<comment type="catalytic activity">
    <reaction evidence="1">
        <text>uridine(1939) in 23S rRNA + S-adenosyl-L-methionine = 5-methyluridine(1939) in 23S rRNA + S-adenosyl-L-homocysteine + H(+)</text>
        <dbReference type="Rhea" id="RHEA:42908"/>
        <dbReference type="Rhea" id="RHEA-COMP:10278"/>
        <dbReference type="Rhea" id="RHEA-COMP:10279"/>
        <dbReference type="ChEBI" id="CHEBI:15378"/>
        <dbReference type="ChEBI" id="CHEBI:57856"/>
        <dbReference type="ChEBI" id="CHEBI:59789"/>
        <dbReference type="ChEBI" id="CHEBI:65315"/>
        <dbReference type="ChEBI" id="CHEBI:74447"/>
        <dbReference type="EC" id="2.1.1.190"/>
    </reaction>
</comment>
<comment type="similarity">
    <text evidence="1">Belongs to the class I-like SAM-binding methyltransferase superfamily. RNA M5U methyltransferase family. RlmD subfamily.</text>
</comment>
<sequence>MIEETQTPSPPAPAPAPAEYPIDLLTVESLDIEAQGIAHRADGKVVFIEGALPFEQVTANVYRKKSSFEKATLTAIYRESSQRVTPACPHFGMHTGACGGCKMQHLHIGAQVAVKQRVLEDNLRFIGKVKADNLLRPIEGPAWHYRYRARLSVRYVRKKGTALVGFHERKSAYVADMTECHVVPQHVSDMLVPLRGLISSMDARETIPQIELACGDDLTAMVLRHMEPLSVADLARLRAFAAANAGLQWWVQSGGLDTVKLLDAQVAELSYGLPEFGITMPFKPTDFTQVNPHINQVLVSRALRLLGVQPTERVIDWFCGLGNFTLPLATRAREVLGIEGSEVLVARSRENYERNKASSHVRPALEATKFVARNLFEMTPAMLVKDGAAEKWLVDPPREGAFELFKSLAALHQQVVTGVPCDDGIHQQSLALGGWTPPSRIVYVSCNPATLARDAGVLVEGGGYRCTAAGVVNMFPHTAHVESMAVFERL</sequence>
<feature type="chain" id="PRO_1000148880" description="23S rRNA (uracil(1939)-C(5))-methyltransferase RlmD">
    <location>
        <begin position="1"/>
        <end position="490"/>
    </location>
</feature>
<feature type="domain" description="TRAM" evidence="1">
    <location>
        <begin position="14"/>
        <end position="75"/>
    </location>
</feature>
<feature type="active site" description="Nucleophile" evidence="1">
    <location>
        <position position="446"/>
    </location>
</feature>
<feature type="binding site" evidence="1">
    <location>
        <position position="88"/>
    </location>
    <ligand>
        <name>[4Fe-4S] cluster</name>
        <dbReference type="ChEBI" id="CHEBI:49883"/>
    </ligand>
</feature>
<feature type="binding site" evidence="1">
    <location>
        <position position="98"/>
    </location>
    <ligand>
        <name>[4Fe-4S] cluster</name>
        <dbReference type="ChEBI" id="CHEBI:49883"/>
    </ligand>
</feature>
<feature type="binding site" evidence="1">
    <location>
        <position position="101"/>
    </location>
    <ligand>
        <name>[4Fe-4S] cluster</name>
        <dbReference type="ChEBI" id="CHEBI:49883"/>
    </ligand>
</feature>
<feature type="binding site" evidence="1">
    <location>
        <position position="180"/>
    </location>
    <ligand>
        <name>[4Fe-4S] cluster</name>
        <dbReference type="ChEBI" id="CHEBI:49883"/>
    </ligand>
</feature>
<feature type="binding site" evidence="1">
    <location>
        <position position="289"/>
    </location>
    <ligand>
        <name>S-adenosyl-L-methionine</name>
        <dbReference type="ChEBI" id="CHEBI:59789"/>
    </ligand>
</feature>
<feature type="binding site" evidence="1">
    <location>
        <position position="318"/>
    </location>
    <ligand>
        <name>S-adenosyl-L-methionine</name>
        <dbReference type="ChEBI" id="CHEBI:59789"/>
    </ligand>
</feature>
<feature type="binding site" evidence="1">
    <location>
        <position position="323"/>
    </location>
    <ligand>
        <name>S-adenosyl-L-methionine</name>
        <dbReference type="ChEBI" id="CHEBI:59789"/>
    </ligand>
</feature>
<feature type="binding site" evidence="1">
    <location>
        <position position="339"/>
    </location>
    <ligand>
        <name>S-adenosyl-L-methionine</name>
        <dbReference type="ChEBI" id="CHEBI:59789"/>
    </ligand>
</feature>
<feature type="binding site" evidence="1">
    <location>
        <position position="374"/>
    </location>
    <ligand>
        <name>S-adenosyl-L-methionine</name>
        <dbReference type="ChEBI" id="CHEBI:59789"/>
    </ligand>
</feature>
<feature type="binding site" evidence="1">
    <location>
        <position position="395"/>
    </location>
    <ligand>
        <name>S-adenosyl-L-methionine</name>
        <dbReference type="ChEBI" id="CHEBI:59789"/>
    </ligand>
</feature>
<proteinExistence type="inferred from homology"/>
<gene>
    <name evidence="1" type="primary">rlmD</name>
    <name type="synonym">rumA</name>
    <name type="ordered locus">Pnap_2576</name>
</gene>
<evidence type="ECO:0000255" key="1">
    <source>
        <dbReference type="HAMAP-Rule" id="MF_01010"/>
    </source>
</evidence>
<organism>
    <name type="scientific">Polaromonas naphthalenivorans (strain CJ2)</name>
    <dbReference type="NCBI Taxonomy" id="365044"/>
    <lineage>
        <taxon>Bacteria</taxon>
        <taxon>Pseudomonadati</taxon>
        <taxon>Pseudomonadota</taxon>
        <taxon>Betaproteobacteria</taxon>
        <taxon>Burkholderiales</taxon>
        <taxon>Comamonadaceae</taxon>
        <taxon>Polaromonas</taxon>
    </lineage>
</organism>
<name>RLMD_POLNA</name>